<comment type="function">
    <text evidence="1">Catalyzes the reversible oxidation of malate to oxaloacetate.</text>
</comment>
<comment type="catalytic activity">
    <reaction evidence="1">
        <text>(S)-malate + NAD(+) = oxaloacetate + NADH + H(+)</text>
        <dbReference type="Rhea" id="RHEA:21432"/>
        <dbReference type="ChEBI" id="CHEBI:15378"/>
        <dbReference type="ChEBI" id="CHEBI:15589"/>
        <dbReference type="ChEBI" id="CHEBI:16452"/>
        <dbReference type="ChEBI" id="CHEBI:57540"/>
        <dbReference type="ChEBI" id="CHEBI:57945"/>
        <dbReference type="EC" id="1.1.1.37"/>
    </reaction>
</comment>
<comment type="similarity">
    <text evidence="1">Belongs to the LDH/MDH superfamily. MDH type 3 family.</text>
</comment>
<reference key="1">
    <citation type="submission" date="2006-12" db="EMBL/GenBank/DDBJ databases">
        <authorList>
            <person name="Hendrix L."/>
            <person name="Mohamoud Y."/>
            <person name="Radune D."/>
            <person name="Shvartsbeyn A."/>
            <person name="Daugherty S."/>
            <person name="Dodson R."/>
            <person name="Durkin A.S."/>
            <person name="Harkins D."/>
            <person name="Huot H."/>
            <person name="Kothari S.P."/>
            <person name="Madupu R."/>
            <person name="Li J."/>
            <person name="Nelson W.C."/>
            <person name="Shrivastava S."/>
            <person name="Giglio M.G."/>
            <person name="Haft D."/>
            <person name="Selengut J."/>
            <person name="Fraser-Ligget C."/>
            <person name="Seshadri R."/>
        </authorList>
    </citation>
    <scope>NUCLEOTIDE SEQUENCE [LARGE SCALE GENOMIC DNA]</scope>
    <source>
        <strain>ATCC 35685 / KC583 / Herrer 020/F12,63</strain>
    </source>
</reference>
<name>MDH_BARBK</name>
<dbReference type="EC" id="1.1.1.37" evidence="1"/>
<dbReference type="EMBL" id="CP000524">
    <property type="protein sequence ID" value="ABM44647.1"/>
    <property type="molecule type" value="Genomic_DNA"/>
</dbReference>
<dbReference type="RefSeq" id="WP_005765710.1">
    <property type="nucleotide sequence ID" value="NC_008783.1"/>
</dbReference>
<dbReference type="SMR" id="A1UQV8"/>
<dbReference type="STRING" id="360095.BARBAKC583_0022"/>
<dbReference type="GeneID" id="4684498"/>
<dbReference type="KEGG" id="bbk:BARBAKC583_0022"/>
<dbReference type="PATRIC" id="fig|360095.6.peg.22"/>
<dbReference type="eggNOG" id="COG0039">
    <property type="taxonomic scope" value="Bacteria"/>
</dbReference>
<dbReference type="HOGENOM" id="CLU_045401_2_1_5"/>
<dbReference type="OrthoDB" id="9802969at2"/>
<dbReference type="Proteomes" id="UP000000643">
    <property type="component" value="Chromosome"/>
</dbReference>
<dbReference type="GO" id="GO:0004459">
    <property type="term" value="F:L-lactate dehydrogenase activity"/>
    <property type="evidence" value="ECO:0007669"/>
    <property type="project" value="TreeGrafter"/>
</dbReference>
<dbReference type="GO" id="GO:0030060">
    <property type="term" value="F:L-malate dehydrogenase (NAD+) activity"/>
    <property type="evidence" value="ECO:0007669"/>
    <property type="project" value="UniProtKB-UniRule"/>
</dbReference>
<dbReference type="GO" id="GO:0006089">
    <property type="term" value="P:lactate metabolic process"/>
    <property type="evidence" value="ECO:0007669"/>
    <property type="project" value="TreeGrafter"/>
</dbReference>
<dbReference type="GO" id="GO:0006099">
    <property type="term" value="P:tricarboxylic acid cycle"/>
    <property type="evidence" value="ECO:0007669"/>
    <property type="project" value="UniProtKB-UniRule"/>
</dbReference>
<dbReference type="CDD" id="cd01339">
    <property type="entry name" value="LDH-like_MDH"/>
    <property type="match status" value="1"/>
</dbReference>
<dbReference type="FunFam" id="3.40.50.720:FF:000018">
    <property type="entry name" value="Malate dehydrogenase"/>
    <property type="match status" value="1"/>
</dbReference>
<dbReference type="FunFam" id="3.90.110.10:FF:000004">
    <property type="entry name" value="Malate dehydrogenase"/>
    <property type="match status" value="1"/>
</dbReference>
<dbReference type="Gene3D" id="3.90.110.10">
    <property type="entry name" value="Lactate dehydrogenase/glycoside hydrolase, family 4, C-terminal"/>
    <property type="match status" value="1"/>
</dbReference>
<dbReference type="Gene3D" id="3.40.50.720">
    <property type="entry name" value="NAD(P)-binding Rossmann-like Domain"/>
    <property type="match status" value="1"/>
</dbReference>
<dbReference type="HAMAP" id="MF_00487">
    <property type="entry name" value="Malate_dehydrog_3"/>
    <property type="match status" value="1"/>
</dbReference>
<dbReference type="InterPro" id="IPR001557">
    <property type="entry name" value="L-lactate/malate_DH"/>
</dbReference>
<dbReference type="InterPro" id="IPR022383">
    <property type="entry name" value="Lactate/malate_DH_C"/>
</dbReference>
<dbReference type="InterPro" id="IPR001236">
    <property type="entry name" value="Lactate/malate_DH_N"/>
</dbReference>
<dbReference type="InterPro" id="IPR015955">
    <property type="entry name" value="Lactate_DH/Glyco_Ohase_4_C"/>
</dbReference>
<dbReference type="InterPro" id="IPR011275">
    <property type="entry name" value="Malate_DH_type3"/>
</dbReference>
<dbReference type="InterPro" id="IPR036291">
    <property type="entry name" value="NAD(P)-bd_dom_sf"/>
</dbReference>
<dbReference type="NCBIfam" id="TIGR01763">
    <property type="entry name" value="MalateDH_bact"/>
    <property type="match status" value="1"/>
</dbReference>
<dbReference type="NCBIfam" id="NF004863">
    <property type="entry name" value="PRK06223.1"/>
    <property type="match status" value="1"/>
</dbReference>
<dbReference type="PANTHER" id="PTHR43128">
    <property type="entry name" value="L-2-HYDROXYCARBOXYLATE DEHYDROGENASE (NAD(P)(+))"/>
    <property type="match status" value="1"/>
</dbReference>
<dbReference type="PANTHER" id="PTHR43128:SF16">
    <property type="entry name" value="L-LACTATE DEHYDROGENASE"/>
    <property type="match status" value="1"/>
</dbReference>
<dbReference type="Pfam" id="PF02866">
    <property type="entry name" value="Ldh_1_C"/>
    <property type="match status" value="1"/>
</dbReference>
<dbReference type="Pfam" id="PF00056">
    <property type="entry name" value="Ldh_1_N"/>
    <property type="match status" value="1"/>
</dbReference>
<dbReference type="PIRSF" id="PIRSF000102">
    <property type="entry name" value="Lac_mal_DH"/>
    <property type="match status" value="1"/>
</dbReference>
<dbReference type="PRINTS" id="PR00086">
    <property type="entry name" value="LLDHDRGNASE"/>
</dbReference>
<dbReference type="SUPFAM" id="SSF56327">
    <property type="entry name" value="LDH C-terminal domain-like"/>
    <property type="match status" value="1"/>
</dbReference>
<dbReference type="SUPFAM" id="SSF51735">
    <property type="entry name" value="NAD(P)-binding Rossmann-fold domains"/>
    <property type="match status" value="1"/>
</dbReference>
<gene>
    <name evidence="1" type="primary">mdh</name>
    <name type="ordered locus">BARBAKC583_0022</name>
</gene>
<keyword id="KW-0520">NAD</keyword>
<keyword id="KW-0560">Oxidoreductase</keyword>
<keyword id="KW-0816">Tricarboxylic acid cycle</keyword>
<protein>
    <recommendedName>
        <fullName evidence="1">Malate dehydrogenase</fullName>
        <ecNumber evidence="1">1.1.1.37</ecNumber>
    </recommendedName>
</protein>
<organism>
    <name type="scientific">Bartonella bacilliformis (strain ATCC 35685 / KC583 / Herrer 020/F12,63)</name>
    <dbReference type="NCBI Taxonomy" id="360095"/>
    <lineage>
        <taxon>Bacteria</taxon>
        <taxon>Pseudomonadati</taxon>
        <taxon>Pseudomonadota</taxon>
        <taxon>Alphaproteobacteria</taxon>
        <taxon>Hyphomicrobiales</taxon>
        <taxon>Bartonellaceae</taxon>
        <taxon>Bartonella</taxon>
    </lineage>
</organism>
<sequence>MKRKKIALIGSGMIGGTLAHMIGLKELGDIVLFDVAEGLPQGKALDIAESSPVDGFDINLTGANAYEAIEGADVIIVTAGVARKPGMSRDDLLGINLKVMEQVGAGIKKYAPSAFVICITNPLDAMVWALQKFSGLPAQKVVGMAGVLDSARFRYFLSQEFNISIKDITAFVLGGHGDSMVPLVRYSTVSGIPLPDLVKMGWTTHEKIDQIVQRTRDGGAEIVSLLKTGSAFYAPASSAVAMAEAYLKDTRRVLPVAARLSGEYGIKDMYVGVPVVIGAGGVERVIEIDLNDNEKSAFEKSVNAVKELCKTCSALAPNLKE</sequence>
<evidence type="ECO:0000255" key="1">
    <source>
        <dbReference type="HAMAP-Rule" id="MF_00487"/>
    </source>
</evidence>
<proteinExistence type="inferred from homology"/>
<feature type="chain" id="PRO_1000026465" description="Malate dehydrogenase">
    <location>
        <begin position="1"/>
        <end position="321"/>
    </location>
</feature>
<feature type="active site" description="Proton acceptor" evidence="1">
    <location>
        <position position="176"/>
    </location>
</feature>
<feature type="binding site" evidence="1">
    <location>
        <begin position="10"/>
        <end position="15"/>
    </location>
    <ligand>
        <name>NAD(+)</name>
        <dbReference type="ChEBI" id="CHEBI:57540"/>
    </ligand>
</feature>
<feature type="binding site" evidence="1">
    <location>
        <position position="34"/>
    </location>
    <ligand>
        <name>NAD(+)</name>
        <dbReference type="ChEBI" id="CHEBI:57540"/>
    </ligand>
</feature>
<feature type="binding site" evidence="1">
    <location>
        <position position="83"/>
    </location>
    <ligand>
        <name>substrate</name>
    </ligand>
</feature>
<feature type="binding site" evidence="1">
    <location>
        <position position="89"/>
    </location>
    <ligand>
        <name>substrate</name>
    </ligand>
</feature>
<feature type="binding site" evidence="1">
    <location>
        <position position="96"/>
    </location>
    <ligand>
        <name>NAD(+)</name>
        <dbReference type="ChEBI" id="CHEBI:57540"/>
    </ligand>
</feature>
<feature type="binding site" evidence="1">
    <location>
        <begin position="119"/>
        <end position="121"/>
    </location>
    <ligand>
        <name>NAD(+)</name>
        <dbReference type="ChEBI" id="CHEBI:57540"/>
    </ligand>
</feature>
<feature type="binding site" evidence="1">
    <location>
        <position position="121"/>
    </location>
    <ligand>
        <name>substrate</name>
    </ligand>
</feature>
<feature type="binding site" evidence="1">
    <location>
        <position position="152"/>
    </location>
    <ligand>
        <name>substrate</name>
    </ligand>
</feature>
<accession>A1UQV8</accession>